<proteinExistence type="inferred from homology"/>
<name>PNP_HAMD5</name>
<comment type="function">
    <text evidence="1">Involved in mRNA degradation. Catalyzes the phosphorolysis of single-stranded polyribonucleotides processively in the 3'- to 5'-direction.</text>
</comment>
<comment type="catalytic activity">
    <reaction evidence="1">
        <text>RNA(n+1) + phosphate = RNA(n) + a ribonucleoside 5'-diphosphate</text>
        <dbReference type="Rhea" id="RHEA:22096"/>
        <dbReference type="Rhea" id="RHEA-COMP:14527"/>
        <dbReference type="Rhea" id="RHEA-COMP:17342"/>
        <dbReference type="ChEBI" id="CHEBI:43474"/>
        <dbReference type="ChEBI" id="CHEBI:57930"/>
        <dbReference type="ChEBI" id="CHEBI:140395"/>
        <dbReference type="EC" id="2.7.7.8"/>
    </reaction>
</comment>
<comment type="cofactor">
    <cofactor evidence="1">
        <name>Mg(2+)</name>
        <dbReference type="ChEBI" id="CHEBI:18420"/>
    </cofactor>
</comment>
<comment type="subunit">
    <text evidence="1">Component of the RNA degradosome, which is a multiprotein complex involved in RNA processing and mRNA degradation.</text>
</comment>
<comment type="subcellular location">
    <subcellularLocation>
        <location evidence="1">Cytoplasm</location>
    </subcellularLocation>
</comment>
<comment type="similarity">
    <text evidence="1">Belongs to the polyribonucleotide nucleotidyltransferase family.</text>
</comment>
<accession>C4K3E6</accession>
<keyword id="KW-0963">Cytoplasm</keyword>
<keyword id="KW-0460">Magnesium</keyword>
<keyword id="KW-0479">Metal-binding</keyword>
<keyword id="KW-0548">Nucleotidyltransferase</keyword>
<keyword id="KW-0694">RNA-binding</keyword>
<keyword id="KW-0808">Transferase</keyword>
<evidence type="ECO:0000255" key="1">
    <source>
        <dbReference type="HAMAP-Rule" id="MF_01595"/>
    </source>
</evidence>
<organism>
    <name type="scientific">Hamiltonella defensa subsp. Acyrthosiphon pisum (strain 5AT)</name>
    <dbReference type="NCBI Taxonomy" id="572265"/>
    <lineage>
        <taxon>Bacteria</taxon>
        <taxon>Pseudomonadati</taxon>
        <taxon>Pseudomonadota</taxon>
        <taxon>Gammaproteobacteria</taxon>
        <taxon>Enterobacterales</taxon>
        <taxon>Enterobacteriaceae</taxon>
        <taxon>aphid secondary symbionts</taxon>
        <taxon>Candidatus Hamiltonella</taxon>
    </lineage>
</organism>
<sequence length="716" mass="78838">MFTPTICRFDYGQLKVTIETGMMARQATAAVMVIIEGTAVLVTVVAQKEAKPGQTFFPLSVHYQERSYAVGRIPSNFFRRETRPNEGETLTSRLIDRPIRPLFPKDFLNEVQVIATVVSVNPKVNPDIVAMIGASAVLSLSGIPFHEPIGAARVGFINGAYVLNPTPEELKQSDLNLVVAGTKNAVLMVESEANILTEEQMLGAIIFGHEQQQIVIESINDLVKKAGKLKWPFTPKIVDEKLRSCITEEDKKDLSNAYLITDKQERYAKLNEIKTNIIERILKENETVNAEQIQDILYNFEKNLVRQRILKDEPRIDGRDKDMIRALHACTGILPRTHGSALFTRGETQALVTTTLGTSRDLQTIDDLMGERSDSFLFHYNFPPYSVGETGMLGSPKRREIGHARLAKRALMAVMPNIEEFPYTVRVVSEITESNGSSSMASVCGASLALMDAGVPIKSAVAGIAMGLVKEEDKFVVLSDILGDEDHLGDMDFKVAGTSEGITALQMDMKIQGITPEIMQSALHHAKAARLHILSVMNQVISSASSTISQYAPHIYNIKINPEKIKDVIGKGGAVIRALSDETDTKIDISDDGNITIAALSQKSAAFAQQRIEEITANIEVGRIYQGTVTRIADYGAFVSIASAKEGLVHISQIAEGRVEKVTDHLKLKQQVSVKVLEIDRQGRIRLSIKDAIADTSEHKIEDTPVDSSFEESQKQ</sequence>
<dbReference type="EC" id="2.7.7.8" evidence="1"/>
<dbReference type="EMBL" id="CP001277">
    <property type="protein sequence ID" value="ACQ67089.1"/>
    <property type="molecule type" value="Genomic_DNA"/>
</dbReference>
<dbReference type="RefSeq" id="WP_012738050.1">
    <property type="nucleotide sequence ID" value="NC_012751.1"/>
</dbReference>
<dbReference type="SMR" id="C4K3E6"/>
<dbReference type="STRING" id="572265.HDEF_0327"/>
<dbReference type="GeneID" id="66260242"/>
<dbReference type="KEGG" id="hde:HDEF_0327"/>
<dbReference type="eggNOG" id="COG1185">
    <property type="taxonomic scope" value="Bacteria"/>
</dbReference>
<dbReference type="HOGENOM" id="CLU_004217_2_2_6"/>
<dbReference type="Proteomes" id="UP000002334">
    <property type="component" value="Chromosome"/>
</dbReference>
<dbReference type="GO" id="GO:0005829">
    <property type="term" value="C:cytosol"/>
    <property type="evidence" value="ECO:0007669"/>
    <property type="project" value="TreeGrafter"/>
</dbReference>
<dbReference type="GO" id="GO:0000175">
    <property type="term" value="F:3'-5'-RNA exonuclease activity"/>
    <property type="evidence" value="ECO:0007669"/>
    <property type="project" value="TreeGrafter"/>
</dbReference>
<dbReference type="GO" id="GO:0000287">
    <property type="term" value="F:magnesium ion binding"/>
    <property type="evidence" value="ECO:0007669"/>
    <property type="project" value="UniProtKB-UniRule"/>
</dbReference>
<dbReference type="GO" id="GO:0004654">
    <property type="term" value="F:polyribonucleotide nucleotidyltransferase activity"/>
    <property type="evidence" value="ECO:0007669"/>
    <property type="project" value="UniProtKB-UniRule"/>
</dbReference>
<dbReference type="GO" id="GO:0003723">
    <property type="term" value="F:RNA binding"/>
    <property type="evidence" value="ECO:0007669"/>
    <property type="project" value="UniProtKB-UniRule"/>
</dbReference>
<dbReference type="GO" id="GO:0006402">
    <property type="term" value="P:mRNA catabolic process"/>
    <property type="evidence" value="ECO:0007669"/>
    <property type="project" value="UniProtKB-UniRule"/>
</dbReference>
<dbReference type="GO" id="GO:0006396">
    <property type="term" value="P:RNA processing"/>
    <property type="evidence" value="ECO:0007669"/>
    <property type="project" value="InterPro"/>
</dbReference>
<dbReference type="CDD" id="cd02393">
    <property type="entry name" value="KH-I_PNPase"/>
    <property type="match status" value="1"/>
</dbReference>
<dbReference type="CDD" id="cd11363">
    <property type="entry name" value="RNase_PH_PNPase_1"/>
    <property type="match status" value="1"/>
</dbReference>
<dbReference type="CDD" id="cd11364">
    <property type="entry name" value="RNase_PH_PNPase_2"/>
    <property type="match status" value="1"/>
</dbReference>
<dbReference type="CDD" id="cd04472">
    <property type="entry name" value="S1_PNPase"/>
    <property type="match status" value="1"/>
</dbReference>
<dbReference type="FunFam" id="2.40.50.140:FF:000023">
    <property type="entry name" value="Polyribonucleotide nucleotidyltransferase"/>
    <property type="match status" value="1"/>
</dbReference>
<dbReference type="FunFam" id="3.30.1370.10:FF:000001">
    <property type="entry name" value="Polyribonucleotide nucleotidyltransferase"/>
    <property type="match status" value="1"/>
</dbReference>
<dbReference type="FunFam" id="3.30.230.70:FF:000001">
    <property type="entry name" value="Polyribonucleotide nucleotidyltransferase"/>
    <property type="match status" value="1"/>
</dbReference>
<dbReference type="FunFam" id="3.30.230.70:FF:000002">
    <property type="entry name" value="Polyribonucleotide nucleotidyltransferase"/>
    <property type="match status" value="1"/>
</dbReference>
<dbReference type="Gene3D" id="3.30.230.70">
    <property type="entry name" value="GHMP Kinase, N-terminal domain"/>
    <property type="match status" value="2"/>
</dbReference>
<dbReference type="Gene3D" id="3.30.1370.10">
    <property type="entry name" value="K Homology domain, type 1"/>
    <property type="match status" value="1"/>
</dbReference>
<dbReference type="Gene3D" id="2.40.50.140">
    <property type="entry name" value="Nucleic acid-binding proteins"/>
    <property type="match status" value="1"/>
</dbReference>
<dbReference type="HAMAP" id="MF_01595">
    <property type="entry name" value="PNPase"/>
    <property type="match status" value="1"/>
</dbReference>
<dbReference type="InterPro" id="IPR001247">
    <property type="entry name" value="ExoRNase_PH_dom1"/>
</dbReference>
<dbReference type="InterPro" id="IPR015847">
    <property type="entry name" value="ExoRNase_PH_dom2"/>
</dbReference>
<dbReference type="InterPro" id="IPR036345">
    <property type="entry name" value="ExoRNase_PH_dom2_sf"/>
</dbReference>
<dbReference type="InterPro" id="IPR004087">
    <property type="entry name" value="KH_dom"/>
</dbReference>
<dbReference type="InterPro" id="IPR004088">
    <property type="entry name" value="KH_dom_type_1"/>
</dbReference>
<dbReference type="InterPro" id="IPR036612">
    <property type="entry name" value="KH_dom_type_1_sf"/>
</dbReference>
<dbReference type="InterPro" id="IPR012340">
    <property type="entry name" value="NA-bd_OB-fold"/>
</dbReference>
<dbReference type="InterPro" id="IPR012162">
    <property type="entry name" value="PNPase"/>
</dbReference>
<dbReference type="InterPro" id="IPR027408">
    <property type="entry name" value="PNPase/RNase_PH_dom_sf"/>
</dbReference>
<dbReference type="InterPro" id="IPR015848">
    <property type="entry name" value="PNPase_PH_RNA-bd_bac/org-type"/>
</dbReference>
<dbReference type="InterPro" id="IPR020568">
    <property type="entry name" value="Ribosomal_Su5_D2-typ_SF"/>
</dbReference>
<dbReference type="InterPro" id="IPR003029">
    <property type="entry name" value="S1_domain"/>
</dbReference>
<dbReference type="NCBIfam" id="TIGR03591">
    <property type="entry name" value="polynuc_phos"/>
    <property type="match status" value="1"/>
</dbReference>
<dbReference type="NCBIfam" id="NF008805">
    <property type="entry name" value="PRK11824.1"/>
    <property type="match status" value="1"/>
</dbReference>
<dbReference type="PANTHER" id="PTHR11252">
    <property type="entry name" value="POLYRIBONUCLEOTIDE NUCLEOTIDYLTRANSFERASE"/>
    <property type="match status" value="1"/>
</dbReference>
<dbReference type="PANTHER" id="PTHR11252:SF0">
    <property type="entry name" value="POLYRIBONUCLEOTIDE NUCLEOTIDYLTRANSFERASE 1, MITOCHONDRIAL"/>
    <property type="match status" value="1"/>
</dbReference>
<dbReference type="Pfam" id="PF00013">
    <property type="entry name" value="KH_1"/>
    <property type="match status" value="1"/>
</dbReference>
<dbReference type="Pfam" id="PF03726">
    <property type="entry name" value="PNPase"/>
    <property type="match status" value="1"/>
</dbReference>
<dbReference type="Pfam" id="PF01138">
    <property type="entry name" value="RNase_PH"/>
    <property type="match status" value="2"/>
</dbReference>
<dbReference type="Pfam" id="PF03725">
    <property type="entry name" value="RNase_PH_C"/>
    <property type="match status" value="2"/>
</dbReference>
<dbReference type="Pfam" id="PF00575">
    <property type="entry name" value="S1"/>
    <property type="match status" value="1"/>
</dbReference>
<dbReference type="PIRSF" id="PIRSF005499">
    <property type="entry name" value="PNPase"/>
    <property type="match status" value="1"/>
</dbReference>
<dbReference type="SMART" id="SM00322">
    <property type="entry name" value="KH"/>
    <property type="match status" value="1"/>
</dbReference>
<dbReference type="SMART" id="SM00316">
    <property type="entry name" value="S1"/>
    <property type="match status" value="1"/>
</dbReference>
<dbReference type="SUPFAM" id="SSF54791">
    <property type="entry name" value="Eukaryotic type KH-domain (KH-domain type I)"/>
    <property type="match status" value="1"/>
</dbReference>
<dbReference type="SUPFAM" id="SSF50249">
    <property type="entry name" value="Nucleic acid-binding proteins"/>
    <property type="match status" value="1"/>
</dbReference>
<dbReference type="SUPFAM" id="SSF55666">
    <property type="entry name" value="Ribonuclease PH domain 2-like"/>
    <property type="match status" value="2"/>
</dbReference>
<dbReference type="SUPFAM" id="SSF54211">
    <property type="entry name" value="Ribosomal protein S5 domain 2-like"/>
    <property type="match status" value="2"/>
</dbReference>
<dbReference type="PROSITE" id="PS50084">
    <property type="entry name" value="KH_TYPE_1"/>
    <property type="match status" value="1"/>
</dbReference>
<dbReference type="PROSITE" id="PS50126">
    <property type="entry name" value="S1"/>
    <property type="match status" value="1"/>
</dbReference>
<reference key="1">
    <citation type="journal article" date="2009" name="Proc. Natl. Acad. Sci. U.S.A.">
        <title>Hamiltonella defensa, genome evolution of protective bacterial endosymbiont from pathogenic ancestors.</title>
        <authorList>
            <person name="Degnan P.H."/>
            <person name="Yu Y."/>
            <person name="Sisneros N."/>
            <person name="Wing R.A."/>
            <person name="Moran N.A."/>
        </authorList>
    </citation>
    <scope>NUCLEOTIDE SEQUENCE [LARGE SCALE GENOMIC DNA]</scope>
    <source>
        <strain>5AT</strain>
    </source>
</reference>
<feature type="chain" id="PRO_1000215662" description="Polyribonucleotide nucleotidyltransferase">
    <location>
        <begin position="1"/>
        <end position="716"/>
    </location>
</feature>
<feature type="domain" description="KH" evidence="1">
    <location>
        <begin position="553"/>
        <end position="612"/>
    </location>
</feature>
<feature type="domain" description="S1 motif" evidence="1">
    <location>
        <begin position="622"/>
        <end position="690"/>
    </location>
</feature>
<feature type="binding site" evidence="1">
    <location>
        <position position="486"/>
    </location>
    <ligand>
        <name>Mg(2+)</name>
        <dbReference type="ChEBI" id="CHEBI:18420"/>
    </ligand>
</feature>
<feature type="binding site" evidence="1">
    <location>
        <position position="492"/>
    </location>
    <ligand>
        <name>Mg(2+)</name>
        <dbReference type="ChEBI" id="CHEBI:18420"/>
    </ligand>
</feature>
<protein>
    <recommendedName>
        <fullName evidence="1">Polyribonucleotide nucleotidyltransferase</fullName>
        <ecNumber evidence="1">2.7.7.8</ecNumber>
    </recommendedName>
    <alternativeName>
        <fullName evidence="1">Polynucleotide phosphorylase</fullName>
        <shortName evidence="1">PNPase</shortName>
    </alternativeName>
</protein>
<gene>
    <name evidence="1" type="primary">pnp</name>
    <name type="ordered locus">HDEF_0327</name>
</gene>